<sequence>MIPVLPPLEALLDRLYVVALPMRVRFRGITTREVALIEGPAGWGEFGAFVEYQSAQACAWLASAIETAYCAPPPVRRDRVPINATVPAVAAAQVGEVLARFPGARTAKVKVAEPGQSLADDIERVNAVRELVPMVRVDANGGWGVAEAVAAAAALTADGPLEYLEQPCATVAELAELRRRVDVPIAADESIRKAEDPLAVVRAQAADIAVLKVAPLGGISALLDIAARIAVPVVVSSALDSAVGIAAGLTAAAALPELDHACGLGTGGLFEEDVAEPAAPVDGFLAVARTTPDPARLQALGAPPQRRQWWIDRVKACYSLLVPSFG</sequence>
<name>MENC_MYCTO</name>
<evidence type="ECO:0000255" key="1">
    <source>
        <dbReference type="HAMAP-Rule" id="MF_00470"/>
    </source>
</evidence>
<comment type="function">
    <text evidence="1">Converts 2-succinyl-6-hydroxy-2,4-cyclohexadiene-1-carboxylate (SHCHC) to 2-succinylbenzoate (OSB).</text>
</comment>
<comment type="catalytic activity">
    <reaction evidence="1">
        <text>(1R,6R)-6-hydroxy-2-succinyl-cyclohexa-2,4-diene-1-carboxylate = 2-succinylbenzoate + H2O</text>
        <dbReference type="Rhea" id="RHEA:10196"/>
        <dbReference type="ChEBI" id="CHEBI:15377"/>
        <dbReference type="ChEBI" id="CHEBI:18325"/>
        <dbReference type="ChEBI" id="CHEBI:58689"/>
        <dbReference type="EC" id="4.2.1.113"/>
    </reaction>
</comment>
<comment type="cofactor">
    <cofactor evidence="1">
        <name>a divalent metal cation</name>
        <dbReference type="ChEBI" id="CHEBI:60240"/>
    </cofactor>
</comment>
<comment type="pathway">
    <text evidence="1">Quinol/quinone metabolism; 1,4-dihydroxy-2-naphthoate biosynthesis; 1,4-dihydroxy-2-naphthoate from chorismate: step 4/7.</text>
</comment>
<comment type="pathway">
    <text evidence="1">Quinol/quinone metabolism; menaquinone biosynthesis.</text>
</comment>
<comment type="similarity">
    <text evidence="1">Belongs to the mandelate racemase/muconate lactonizing enzyme family. MenC type 1 subfamily.</text>
</comment>
<feature type="chain" id="PRO_0000427798" description="o-succinylbenzoate synthase">
    <location>
        <begin position="1"/>
        <end position="326"/>
    </location>
</feature>
<feature type="active site" description="Proton donor" evidence="1">
    <location>
        <position position="110"/>
    </location>
</feature>
<feature type="active site" description="Proton acceptor" evidence="1">
    <location>
        <position position="212"/>
    </location>
</feature>
<feature type="binding site" evidence="1">
    <location>
        <position position="138"/>
    </location>
    <ligand>
        <name>Mg(2+)</name>
        <dbReference type="ChEBI" id="CHEBI:18420"/>
    </ligand>
</feature>
<feature type="binding site" evidence="1">
    <location>
        <position position="165"/>
    </location>
    <ligand>
        <name>Mg(2+)</name>
        <dbReference type="ChEBI" id="CHEBI:18420"/>
    </ligand>
</feature>
<feature type="binding site" evidence="1">
    <location>
        <position position="188"/>
    </location>
    <ligand>
        <name>Mg(2+)</name>
        <dbReference type="ChEBI" id="CHEBI:18420"/>
    </ligand>
</feature>
<keyword id="KW-0456">Lyase</keyword>
<keyword id="KW-0460">Magnesium</keyword>
<keyword id="KW-0474">Menaquinone biosynthesis</keyword>
<keyword id="KW-0479">Metal-binding</keyword>
<keyword id="KW-1185">Reference proteome</keyword>
<dbReference type="EC" id="4.2.1.113" evidence="1"/>
<dbReference type="EMBL" id="AE000516">
    <property type="protein sequence ID" value="AAK44802.1"/>
    <property type="molecule type" value="Genomic_DNA"/>
</dbReference>
<dbReference type="PIR" id="D70548">
    <property type="entry name" value="D70548"/>
</dbReference>
<dbReference type="RefSeq" id="WP_003402923.1">
    <property type="nucleotide sequence ID" value="NZ_KK341227.1"/>
</dbReference>
<dbReference type="SMR" id="P9WJP2"/>
<dbReference type="KEGG" id="mtc:MT0579"/>
<dbReference type="PATRIC" id="fig|83331.31.peg.610"/>
<dbReference type="HOGENOM" id="CLU_057696_0_0_11"/>
<dbReference type="UniPathway" id="UPA00079"/>
<dbReference type="UniPathway" id="UPA01057">
    <property type="reaction ID" value="UER00165"/>
</dbReference>
<dbReference type="Proteomes" id="UP000001020">
    <property type="component" value="Chromosome"/>
</dbReference>
<dbReference type="GO" id="GO:0000287">
    <property type="term" value="F:magnesium ion binding"/>
    <property type="evidence" value="ECO:0007669"/>
    <property type="project" value="UniProtKB-UniRule"/>
</dbReference>
<dbReference type="GO" id="GO:0043748">
    <property type="term" value="F:O-succinylbenzoate synthase activity"/>
    <property type="evidence" value="ECO:0007669"/>
    <property type="project" value="UniProtKB-EC"/>
</dbReference>
<dbReference type="GO" id="GO:0009234">
    <property type="term" value="P:menaquinone biosynthetic process"/>
    <property type="evidence" value="ECO:0007669"/>
    <property type="project" value="UniProtKB-UniRule"/>
</dbReference>
<dbReference type="CDD" id="cd03320">
    <property type="entry name" value="OSBS"/>
    <property type="match status" value="1"/>
</dbReference>
<dbReference type="Gene3D" id="3.20.20.120">
    <property type="entry name" value="Enolase-like C-terminal domain"/>
    <property type="match status" value="1"/>
</dbReference>
<dbReference type="HAMAP" id="MF_00470">
    <property type="entry name" value="MenC_1"/>
    <property type="match status" value="1"/>
</dbReference>
<dbReference type="InterPro" id="IPR036849">
    <property type="entry name" value="Enolase-like_C_sf"/>
</dbReference>
<dbReference type="InterPro" id="IPR029065">
    <property type="entry name" value="Enolase_C-like"/>
</dbReference>
<dbReference type="InterPro" id="IPR013342">
    <property type="entry name" value="Mandelate_racemase_C"/>
</dbReference>
<dbReference type="InterPro" id="IPR010196">
    <property type="entry name" value="OSB_synthase_MenC1"/>
</dbReference>
<dbReference type="NCBIfam" id="NF002782">
    <property type="entry name" value="PRK02901.1"/>
    <property type="match status" value="1"/>
</dbReference>
<dbReference type="PANTHER" id="PTHR48073:SF2">
    <property type="entry name" value="O-SUCCINYLBENZOATE SYNTHASE"/>
    <property type="match status" value="1"/>
</dbReference>
<dbReference type="PANTHER" id="PTHR48073">
    <property type="entry name" value="O-SUCCINYLBENZOATE SYNTHASE-RELATED"/>
    <property type="match status" value="1"/>
</dbReference>
<dbReference type="Pfam" id="PF18374">
    <property type="entry name" value="Enolase_like_N"/>
    <property type="match status" value="1"/>
</dbReference>
<dbReference type="Pfam" id="PF13378">
    <property type="entry name" value="MR_MLE_C"/>
    <property type="match status" value="1"/>
</dbReference>
<dbReference type="SFLD" id="SFLDG00180">
    <property type="entry name" value="muconate_cycloisomerase"/>
    <property type="match status" value="1"/>
</dbReference>
<dbReference type="SFLD" id="SFLDF00009">
    <property type="entry name" value="o-succinylbenzoate_synthase"/>
    <property type="match status" value="1"/>
</dbReference>
<dbReference type="SMART" id="SM00922">
    <property type="entry name" value="MR_MLE"/>
    <property type="match status" value="1"/>
</dbReference>
<dbReference type="SUPFAM" id="SSF51604">
    <property type="entry name" value="Enolase C-terminal domain-like"/>
    <property type="match status" value="1"/>
</dbReference>
<accession>P9WJP2</accession>
<accession>L0T446</accession>
<accession>O06419</accession>
<accession>P65425</accession>
<proteinExistence type="inferred from homology"/>
<gene>
    <name evidence="1" type="primary">menC</name>
    <name type="ordered locus">MT0579</name>
</gene>
<protein>
    <recommendedName>
        <fullName evidence="1">o-succinylbenzoate synthase</fullName>
        <shortName evidence="1">OSB synthase</shortName>
        <shortName evidence="1">OSBS</shortName>
        <ecNumber evidence="1">4.2.1.113</ecNumber>
    </recommendedName>
    <alternativeName>
        <fullName evidence="1">4-(2'-carboxyphenyl)-4-oxybutyric acid synthase</fullName>
    </alternativeName>
    <alternativeName>
        <fullName evidence="1">o-succinylbenzoic acid synthase</fullName>
    </alternativeName>
</protein>
<reference key="1">
    <citation type="journal article" date="2002" name="J. Bacteriol.">
        <title>Whole-genome comparison of Mycobacterium tuberculosis clinical and laboratory strains.</title>
        <authorList>
            <person name="Fleischmann R.D."/>
            <person name="Alland D."/>
            <person name="Eisen J.A."/>
            <person name="Carpenter L."/>
            <person name="White O."/>
            <person name="Peterson J.D."/>
            <person name="DeBoy R.T."/>
            <person name="Dodson R.J."/>
            <person name="Gwinn M.L."/>
            <person name="Haft D.H."/>
            <person name="Hickey E.K."/>
            <person name="Kolonay J.F."/>
            <person name="Nelson W.C."/>
            <person name="Umayam L.A."/>
            <person name="Ermolaeva M.D."/>
            <person name="Salzberg S.L."/>
            <person name="Delcher A."/>
            <person name="Utterback T.R."/>
            <person name="Weidman J.F."/>
            <person name="Khouri H.M."/>
            <person name="Gill J."/>
            <person name="Mikula A."/>
            <person name="Bishai W."/>
            <person name="Jacobs W.R. Jr."/>
            <person name="Venter J.C."/>
            <person name="Fraser C.M."/>
        </authorList>
    </citation>
    <scope>NUCLEOTIDE SEQUENCE [LARGE SCALE GENOMIC DNA]</scope>
    <source>
        <strain>CDC 1551 / Oshkosh</strain>
    </source>
</reference>
<organism>
    <name type="scientific">Mycobacterium tuberculosis (strain CDC 1551 / Oshkosh)</name>
    <dbReference type="NCBI Taxonomy" id="83331"/>
    <lineage>
        <taxon>Bacteria</taxon>
        <taxon>Bacillati</taxon>
        <taxon>Actinomycetota</taxon>
        <taxon>Actinomycetes</taxon>
        <taxon>Mycobacteriales</taxon>
        <taxon>Mycobacteriaceae</taxon>
        <taxon>Mycobacterium</taxon>
        <taxon>Mycobacterium tuberculosis complex</taxon>
    </lineage>
</organism>